<feature type="initiator methionine" description="Removed" evidence="1">
    <location>
        <position position="1"/>
    </location>
</feature>
<feature type="chain" id="PRO_0000073582" description="Oncomodulin-1">
    <location>
        <begin position="2"/>
        <end position="109"/>
    </location>
</feature>
<feature type="domain" description="EF-hand 1" evidence="2">
    <location>
        <begin position="39"/>
        <end position="74"/>
    </location>
</feature>
<feature type="domain" description="EF-hand 2" evidence="2">
    <location>
        <begin position="78"/>
        <end position="109"/>
    </location>
</feature>
<feature type="binding site" evidence="2 3 5">
    <location>
        <position position="52"/>
    </location>
    <ligand>
        <name>Ca(2+)</name>
        <dbReference type="ChEBI" id="CHEBI:29108"/>
        <label>1</label>
    </ligand>
</feature>
<feature type="binding site" evidence="2 3 5">
    <location>
        <position position="54"/>
    </location>
    <ligand>
        <name>Ca(2+)</name>
        <dbReference type="ChEBI" id="CHEBI:29108"/>
        <label>1</label>
    </ligand>
</feature>
<feature type="binding site" evidence="2 3 5">
    <location>
        <position position="56"/>
    </location>
    <ligand>
        <name>Ca(2+)</name>
        <dbReference type="ChEBI" id="CHEBI:29108"/>
        <label>1</label>
    </ligand>
</feature>
<feature type="binding site" evidence="2 3 5">
    <location>
        <position position="58"/>
    </location>
    <ligand>
        <name>Ca(2+)</name>
        <dbReference type="ChEBI" id="CHEBI:29108"/>
        <label>1</label>
    </ligand>
</feature>
<feature type="binding site" evidence="2 3 5">
    <location>
        <position position="63"/>
    </location>
    <ligand>
        <name>Ca(2+)</name>
        <dbReference type="ChEBI" id="CHEBI:29108"/>
        <label>1</label>
    </ligand>
</feature>
<feature type="binding site" evidence="2 3 5">
    <location>
        <position position="91"/>
    </location>
    <ligand>
        <name>Ca(2+)</name>
        <dbReference type="ChEBI" id="CHEBI:29108"/>
        <label>2</label>
    </ligand>
</feature>
<feature type="binding site" evidence="2 3 5">
    <location>
        <position position="93"/>
    </location>
    <ligand>
        <name>Ca(2+)</name>
        <dbReference type="ChEBI" id="CHEBI:29108"/>
        <label>2</label>
    </ligand>
</feature>
<feature type="binding site" evidence="2 3 5">
    <location>
        <position position="95"/>
    </location>
    <ligand>
        <name>Ca(2+)</name>
        <dbReference type="ChEBI" id="CHEBI:29108"/>
        <label>2</label>
    </ligand>
</feature>
<feature type="binding site" evidence="2 3 5">
    <location>
        <position position="97"/>
    </location>
    <ligand>
        <name>Ca(2+)</name>
        <dbReference type="ChEBI" id="CHEBI:29108"/>
        <label>2</label>
    </ligand>
</feature>
<feature type="binding site" evidence="2 3 5">
    <location>
        <position position="102"/>
    </location>
    <ligand>
        <name>Ca(2+)</name>
        <dbReference type="ChEBI" id="CHEBI:29108"/>
        <label>2</label>
    </ligand>
</feature>
<feature type="modified residue" description="N-acetylserine" evidence="1">
    <location>
        <position position="2"/>
    </location>
</feature>
<feature type="sequence conflict" description="In Ref. 1; AAA02869." evidence="4" ref="1">
    <original>R</original>
    <variation>Q</variation>
    <location>
        <position position="20"/>
    </location>
</feature>
<feature type="turn" evidence="6">
    <location>
        <begin position="4"/>
        <end position="6"/>
    </location>
</feature>
<feature type="helix" evidence="6">
    <location>
        <begin position="8"/>
        <end position="18"/>
    </location>
</feature>
<feature type="helix" evidence="6">
    <location>
        <begin position="27"/>
        <end position="33"/>
    </location>
</feature>
<feature type="turn" evidence="6">
    <location>
        <begin position="36"/>
        <end position="38"/>
    </location>
</feature>
<feature type="helix" evidence="6">
    <location>
        <begin position="41"/>
        <end position="51"/>
    </location>
</feature>
<feature type="strand" evidence="6">
    <location>
        <begin position="56"/>
        <end position="58"/>
    </location>
</feature>
<feature type="helix" evidence="6">
    <location>
        <begin position="61"/>
        <end position="64"/>
    </location>
</feature>
<feature type="helix" evidence="6">
    <location>
        <begin position="68"/>
        <end position="70"/>
    </location>
</feature>
<feature type="helix" evidence="6">
    <location>
        <begin position="80"/>
        <end position="90"/>
    </location>
</feature>
<feature type="strand" evidence="6">
    <location>
        <begin position="92"/>
        <end position="96"/>
    </location>
</feature>
<feature type="helix" evidence="6">
    <location>
        <begin position="100"/>
        <end position="108"/>
    </location>
</feature>
<keyword id="KW-0002">3D-structure</keyword>
<keyword id="KW-0007">Acetylation</keyword>
<keyword id="KW-0106">Calcium</keyword>
<keyword id="KW-0479">Metal-binding</keyword>
<keyword id="KW-1185">Reference proteome</keyword>
<keyword id="KW-0677">Repeat</keyword>
<sequence>MSITDVLSADDIAAALQECRDPDTFEPQKFFQTSGLSKMSANQVKDVFRFIDNDQSGYLDEEELKFFLQKFESGARELTESETKSLMAAADNDGDGKIGAEEFQEMVHS</sequence>
<proteinExistence type="evidence at protein level"/>
<accession>P0CE72</accession>
<accession>B9EJH7</accession>
<accession>P32930</accession>
<accession>Q6ISI5</accession>
<accession>Q75MW0</accession>
<gene>
    <name type="primary">OCM</name>
    <name type="synonym">OCM1</name>
    <name type="synonym">OCMN</name>
</gene>
<evidence type="ECO:0000250" key="1">
    <source>
        <dbReference type="UniProtKB" id="P02631"/>
    </source>
</evidence>
<evidence type="ECO:0000255" key="2">
    <source>
        <dbReference type="PROSITE-ProRule" id="PRU00448"/>
    </source>
</evidence>
<evidence type="ECO:0000269" key="3">
    <source>
    </source>
</evidence>
<evidence type="ECO:0000305" key="4"/>
<evidence type="ECO:0007744" key="5">
    <source>
        <dbReference type="PDB" id="1TTX"/>
    </source>
</evidence>
<evidence type="ECO:0007829" key="6">
    <source>
        <dbReference type="PDB" id="1TTX"/>
    </source>
</evidence>
<dbReference type="EMBL" id="L20348">
    <property type="protein sequence ID" value="AAA02869.1"/>
    <property type="molecule type" value="Genomic_DNA"/>
</dbReference>
<dbReference type="EMBL" id="L20345">
    <property type="protein sequence ID" value="AAA02869.1"/>
    <property type="status" value="JOINED"/>
    <property type="molecule type" value="Genomic_DNA"/>
</dbReference>
<dbReference type="EMBL" id="L20346">
    <property type="protein sequence ID" value="AAA02869.1"/>
    <property type="status" value="JOINED"/>
    <property type="molecule type" value="Genomic_DNA"/>
</dbReference>
<dbReference type="EMBL" id="L20347">
    <property type="protein sequence ID" value="AAA02869.1"/>
    <property type="status" value="JOINED"/>
    <property type="molecule type" value="Genomic_DNA"/>
</dbReference>
<dbReference type="EMBL" id="AC004983">
    <property type="status" value="NOT_ANNOTATED_CDS"/>
    <property type="molecule type" value="Genomic_DNA"/>
</dbReference>
<dbReference type="EMBL" id="CH471144">
    <property type="protein sequence ID" value="EAW87352.1"/>
    <property type="molecule type" value="Genomic_DNA"/>
</dbReference>
<dbReference type="EMBL" id="BC069468">
    <property type="protein sequence ID" value="AAH69468.1"/>
    <property type="molecule type" value="mRNA"/>
</dbReference>
<dbReference type="EMBL" id="BC069512">
    <property type="protein sequence ID" value="AAH69512.1"/>
    <property type="molecule type" value="mRNA"/>
</dbReference>
<dbReference type="EMBL" id="BC069550">
    <property type="protein sequence ID" value="AAH69550.1"/>
    <property type="molecule type" value="mRNA"/>
</dbReference>
<dbReference type="EMBL" id="BC113706">
    <property type="protein sequence ID" value="AAI13707.1"/>
    <property type="molecule type" value="mRNA"/>
</dbReference>
<dbReference type="EMBL" id="BC113704">
    <property type="protein sequence ID" value="AAI13705.1"/>
    <property type="molecule type" value="mRNA"/>
</dbReference>
<dbReference type="EMBL" id="BC147028">
    <property type="protein sequence ID" value="AAI47029.1"/>
    <property type="molecule type" value="mRNA"/>
</dbReference>
<dbReference type="EMBL" id="BC147029">
    <property type="protein sequence ID" value="AAI47030.1"/>
    <property type="molecule type" value="mRNA"/>
</dbReference>
<dbReference type="CCDS" id="CCDS43548.1"/>
<dbReference type="PIR" id="S35041">
    <property type="entry name" value="PVHUO"/>
</dbReference>
<dbReference type="RefSeq" id="NP_001091091.1">
    <property type="nucleotide sequence ID" value="NM_001097622.2"/>
</dbReference>
<dbReference type="RefSeq" id="NP_001378919.1">
    <property type="nucleotide sequence ID" value="NM_001391990.1"/>
</dbReference>
<dbReference type="RefSeq" id="XP_011513787.1">
    <property type="nucleotide sequence ID" value="XM_011515485.2"/>
</dbReference>
<dbReference type="PDB" id="1TTX">
    <property type="method" value="NMR"/>
    <property type="chains" value="A=1-109"/>
</dbReference>
<dbReference type="PDBsum" id="1TTX"/>
<dbReference type="BMRB" id="P0CE72"/>
<dbReference type="SMR" id="P0CE72"/>
<dbReference type="BioGRID" id="576309">
    <property type="interactions" value="5"/>
</dbReference>
<dbReference type="FunCoup" id="P0CE72">
    <property type="interactions" value="13"/>
</dbReference>
<dbReference type="IntAct" id="P0CE72">
    <property type="interactions" value="3"/>
</dbReference>
<dbReference type="STRING" id="9606.ENSP00000242104"/>
<dbReference type="iPTMnet" id="P0CE72"/>
<dbReference type="PhosphoSitePlus" id="P0CE72"/>
<dbReference type="BioMuta" id="OCM"/>
<dbReference type="DMDM" id="292630843"/>
<dbReference type="MassIVE" id="P0CE72"/>
<dbReference type="PaxDb" id="9606-ENSP00000242104"/>
<dbReference type="PeptideAtlas" id="P0CE72"/>
<dbReference type="Antibodypedia" id="64205">
    <property type="antibodies" value="68 antibodies from 9 providers"/>
</dbReference>
<dbReference type="DNASU" id="654231"/>
<dbReference type="Ensembl" id="ENST00000242104.6">
    <property type="protein sequence ID" value="ENSP00000242104.5"/>
    <property type="gene ID" value="ENSG00000122543.11"/>
</dbReference>
<dbReference type="Ensembl" id="ENST00000416608.5">
    <property type="protein sequence ID" value="ENSP00000401365.1"/>
    <property type="gene ID" value="ENSG00000122543.11"/>
</dbReference>
<dbReference type="GeneID" id="654231"/>
<dbReference type="KEGG" id="hsa:654231"/>
<dbReference type="MANE-Select" id="ENST00000242104.6">
    <property type="protein sequence ID" value="ENSP00000242104.5"/>
    <property type="RefSeq nucleotide sequence ID" value="NM_001097622.2"/>
    <property type="RefSeq protein sequence ID" value="NP_001091091.1"/>
</dbReference>
<dbReference type="UCSC" id="uc003spe.5">
    <property type="organism name" value="human"/>
</dbReference>
<dbReference type="AGR" id="HGNC:8105"/>
<dbReference type="CTD" id="654231"/>
<dbReference type="DisGeNET" id="654231"/>
<dbReference type="GeneCards" id="OCM"/>
<dbReference type="HGNC" id="HGNC:8105">
    <property type="gene designation" value="OCM"/>
</dbReference>
<dbReference type="HPA" id="ENSG00000122543">
    <property type="expression patterns" value="Tissue enhanced (brain)"/>
</dbReference>
<dbReference type="MIM" id="164795">
    <property type="type" value="gene"/>
</dbReference>
<dbReference type="neXtProt" id="NX_P0CE72"/>
<dbReference type="OpenTargets" id="ENSG00000122543"/>
<dbReference type="PharmGKB" id="PA31894"/>
<dbReference type="VEuPathDB" id="HostDB:ENSG00000122543"/>
<dbReference type="eggNOG" id="KOG0027">
    <property type="taxonomic scope" value="Eukaryota"/>
</dbReference>
<dbReference type="GeneTree" id="ENSGT00940000161875"/>
<dbReference type="HOGENOM" id="CLU_157356_0_0_1"/>
<dbReference type="InParanoid" id="P0CE72"/>
<dbReference type="OMA" id="NWLARIC"/>
<dbReference type="OrthoDB" id="9529109at2759"/>
<dbReference type="PAN-GO" id="P0CE72">
    <property type="GO annotations" value="3 GO annotations based on evolutionary models"/>
</dbReference>
<dbReference type="PhylomeDB" id="P0CE72"/>
<dbReference type="TreeFam" id="TF332342"/>
<dbReference type="PathwayCommons" id="P0CE72"/>
<dbReference type="SignaLink" id="P0CE72"/>
<dbReference type="BioGRID-ORCS" id="654231">
    <property type="hits" value="22 hits in 1036 CRISPR screens"/>
</dbReference>
<dbReference type="ChiTaRS" id="OCM">
    <property type="organism name" value="human"/>
</dbReference>
<dbReference type="EvolutionaryTrace" id="P0CE72"/>
<dbReference type="GenomeRNAi" id="654231"/>
<dbReference type="Pharos" id="P0CE72">
    <property type="development level" value="Tbio"/>
</dbReference>
<dbReference type="PRO" id="PR:P0CE72"/>
<dbReference type="Proteomes" id="UP000005640">
    <property type="component" value="Chromosome 7"/>
</dbReference>
<dbReference type="RNAct" id="P0CE72">
    <property type="molecule type" value="protein"/>
</dbReference>
<dbReference type="Bgee" id="ENSG00000122543">
    <property type="expression patterns" value="Expressed in male germ line stem cell (sensu Vertebrata) in testis and 88 other cell types or tissues"/>
</dbReference>
<dbReference type="GO" id="GO:0005737">
    <property type="term" value="C:cytoplasm"/>
    <property type="evidence" value="ECO:0000318"/>
    <property type="project" value="GO_Central"/>
</dbReference>
<dbReference type="GO" id="GO:0005509">
    <property type="term" value="F:calcium ion binding"/>
    <property type="evidence" value="ECO:0000318"/>
    <property type="project" value="GO_Central"/>
</dbReference>
<dbReference type="CDD" id="cd16255">
    <property type="entry name" value="EFh_parvalbumin_beta"/>
    <property type="match status" value="1"/>
</dbReference>
<dbReference type="FunFam" id="1.10.238.10:FF:000060">
    <property type="entry name" value="Parvalbumin, thymic"/>
    <property type="match status" value="1"/>
</dbReference>
<dbReference type="Gene3D" id="1.10.238.10">
    <property type="entry name" value="EF-hand"/>
    <property type="match status" value="1"/>
</dbReference>
<dbReference type="InterPro" id="IPR011992">
    <property type="entry name" value="EF-hand-dom_pair"/>
</dbReference>
<dbReference type="InterPro" id="IPR018247">
    <property type="entry name" value="EF_Hand_1_Ca_BS"/>
</dbReference>
<dbReference type="InterPro" id="IPR002048">
    <property type="entry name" value="EF_hand_dom"/>
</dbReference>
<dbReference type="InterPro" id="IPR008080">
    <property type="entry name" value="Parvalbumin"/>
</dbReference>
<dbReference type="PANTHER" id="PTHR11653:SF4">
    <property type="entry name" value="ONCOMODULIN-2-RELATED"/>
    <property type="match status" value="1"/>
</dbReference>
<dbReference type="PANTHER" id="PTHR11653">
    <property type="entry name" value="PARVALBUMIN ALPHA"/>
    <property type="match status" value="1"/>
</dbReference>
<dbReference type="Pfam" id="PF13499">
    <property type="entry name" value="EF-hand_7"/>
    <property type="match status" value="1"/>
</dbReference>
<dbReference type="PRINTS" id="PR01697">
    <property type="entry name" value="PARVALBUMIN"/>
</dbReference>
<dbReference type="SMART" id="SM00054">
    <property type="entry name" value="EFh"/>
    <property type="match status" value="2"/>
</dbReference>
<dbReference type="SUPFAM" id="SSF47473">
    <property type="entry name" value="EF-hand"/>
    <property type="match status" value="1"/>
</dbReference>
<dbReference type="PROSITE" id="PS00018">
    <property type="entry name" value="EF_HAND_1"/>
    <property type="match status" value="2"/>
</dbReference>
<dbReference type="PROSITE" id="PS50222">
    <property type="entry name" value="EF_HAND_2"/>
    <property type="match status" value="2"/>
</dbReference>
<reference key="1">
    <citation type="journal article" date="1993" name="Eur. J. Biochem.">
        <title>Human alpha and beta parvalbumins. Structure and tissue-specific expression.</title>
        <authorList>
            <person name="Foehr U.G."/>
            <person name="Weber B.R."/>
            <person name="Muentener M."/>
            <person name="Staudenmann W."/>
            <person name="Hughes G.J."/>
            <person name="Frutiger S."/>
            <person name="Banville D."/>
            <person name="Schaefer B.W."/>
            <person name="Heizmann C.W."/>
        </authorList>
    </citation>
    <scope>NUCLEOTIDE SEQUENCE [GENOMIC DNA]</scope>
    <source>
        <tissue>Placenta</tissue>
    </source>
</reference>
<reference key="2">
    <citation type="journal article" date="2003" name="Nature">
        <title>The DNA sequence of human chromosome 7.</title>
        <authorList>
            <person name="Hillier L.W."/>
            <person name="Fulton R.S."/>
            <person name="Fulton L.A."/>
            <person name="Graves T.A."/>
            <person name="Pepin K.H."/>
            <person name="Wagner-McPherson C."/>
            <person name="Layman D."/>
            <person name="Maas J."/>
            <person name="Jaeger S."/>
            <person name="Walker R."/>
            <person name="Wylie K."/>
            <person name="Sekhon M."/>
            <person name="Becker M.C."/>
            <person name="O'Laughlin M.D."/>
            <person name="Schaller M.E."/>
            <person name="Fewell G.A."/>
            <person name="Delehaunty K.D."/>
            <person name="Miner T.L."/>
            <person name="Nash W.E."/>
            <person name="Cordes M."/>
            <person name="Du H."/>
            <person name="Sun H."/>
            <person name="Edwards J."/>
            <person name="Bradshaw-Cordum H."/>
            <person name="Ali J."/>
            <person name="Andrews S."/>
            <person name="Isak A."/>
            <person name="Vanbrunt A."/>
            <person name="Nguyen C."/>
            <person name="Du F."/>
            <person name="Lamar B."/>
            <person name="Courtney L."/>
            <person name="Kalicki J."/>
            <person name="Ozersky P."/>
            <person name="Bielicki L."/>
            <person name="Scott K."/>
            <person name="Holmes A."/>
            <person name="Harkins R."/>
            <person name="Harris A."/>
            <person name="Strong C.M."/>
            <person name="Hou S."/>
            <person name="Tomlinson C."/>
            <person name="Dauphin-Kohlberg S."/>
            <person name="Kozlowicz-Reilly A."/>
            <person name="Leonard S."/>
            <person name="Rohlfing T."/>
            <person name="Rock S.M."/>
            <person name="Tin-Wollam A.-M."/>
            <person name="Abbott A."/>
            <person name="Minx P."/>
            <person name="Maupin R."/>
            <person name="Strowmatt C."/>
            <person name="Latreille P."/>
            <person name="Miller N."/>
            <person name="Johnson D."/>
            <person name="Murray J."/>
            <person name="Woessner J.P."/>
            <person name="Wendl M.C."/>
            <person name="Yang S.-P."/>
            <person name="Schultz B.R."/>
            <person name="Wallis J.W."/>
            <person name="Spieth J."/>
            <person name="Bieri T.A."/>
            <person name="Nelson J.O."/>
            <person name="Berkowicz N."/>
            <person name="Wohldmann P.E."/>
            <person name="Cook L.L."/>
            <person name="Hickenbotham M.T."/>
            <person name="Eldred J."/>
            <person name="Williams D."/>
            <person name="Bedell J.A."/>
            <person name="Mardis E.R."/>
            <person name="Clifton S.W."/>
            <person name="Chissoe S.L."/>
            <person name="Marra M.A."/>
            <person name="Raymond C."/>
            <person name="Haugen E."/>
            <person name="Gillett W."/>
            <person name="Zhou Y."/>
            <person name="James R."/>
            <person name="Phelps K."/>
            <person name="Iadanoto S."/>
            <person name="Bubb K."/>
            <person name="Simms E."/>
            <person name="Levy R."/>
            <person name="Clendenning J."/>
            <person name="Kaul R."/>
            <person name="Kent W.J."/>
            <person name="Furey T.S."/>
            <person name="Baertsch R.A."/>
            <person name="Brent M.R."/>
            <person name="Keibler E."/>
            <person name="Flicek P."/>
            <person name="Bork P."/>
            <person name="Suyama M."/>
            <person name="Bailey J.A."/>
            <person name="Portnoy M.E."/>
            <person name="Torrents D."/>
            <person name="Chinwalla A.T."/>
            <person name="Gish W.R."/>
            <person name="Eddy S.R."/>
            <person name="McPherson J.D."/>
            <person name="Olson M.V."/>
            <person name="Eichler E.E."/>
            <person name="Green E.D."/>
            <person name="Waterston R.H."/>
            <person name="Wilson R.K."/>
        </authorList>
    </citation>
    <scope>NUCLEOTIDE SEQUENCE [LARGE SCALE GENOMIC DNA]</scope>
</reference>
<reference key="3">
    <citation type="submission" date="2005-09" db="EMBL/GenBank/DDBJ databases">
        <authorList>
            <person name="Mural R.J."/>
            <person name="Istrail S."/>
            <person name="Sutton G.G."/>
            <person name="Florea L."/>
            <person name="Halpern A.L."/>
            <person name="Mobarry C.M."/>
            <person name="Lippert R."/>
            <person name="Walenz B."/>
            <person name="Shatkay H."/>
            <person name="Dew I."/>
            <person name="Miller J.R."/>
            <person name="Flanigan M.J."/>
            <person name="Edwards N.J."/>
            <person name="Bolanos R."/>
            <person name="Fasulo D."/>
            <person name="Halldorsson B.V."/>
            <person name="Hannenhalli S."/>
            <person name="Turner R."/>
            <person name="Yooseph S."/>
            <person name="Lu F."/>
            <person name="Nusskern D.R."/>
            <person name="Shue B.C."/>
            <person name="Zheng X.H."/>
            <person name="Zhong F."/>
            <person name="Delcher A.L."/>
            <person name="Huson D.H."/>
            <person name="Kravitz S.A."/>
            <person name="Mouchard L."/>
            <person name="Reinert K."/>
            <person name="Remington K.A."/>
            <person name="Clark A.G."/>
            <person name="Waterman M.S."/>
            <person name="Eichler E.E."/>
            <person name="Adams M.D."/>
            <person name="Hunkapiller M.W."/>
            <person name="Myers E.W."/>
            <person name="Venter J.C."/>
        </authorList>
    </citation>
    <scope>NUCLEOTIDE SEQUENCE [LARGE SCALE GENOMIC DNA]</scope>
</reference>
<reference key="4">
    <citation type="journal article" date="2004" name="Genome Res.">
        <title>The status, quality, and expansion of the NIH full-length cDNA project: the Mammalian Gene Collection (MGC).</title>
        <authorList>
            <consortium name="The MGC Project Team"/>
        </authorList>
    </citation>
    <scope>NUCLEOTIDE SEQUENCE [LARGE SCALE MRNA]</scope>
</reference>
<reference key="5">
    <citation type="journal article" date="2004" name="Biochemistry">
        <title>Solution structure of human beta-parvalbumin and structural comparison with its paralog alpha-parvalbumin and with their rat orthologs.</title>
        <authorList>
            <person name="Babini E."/>
            <person name="Bertini I."/>
            <person name="Capozzi F."/>
            <person name="Del Bianco C."/>
            <person name="Hollender D."/>
            <person name="Kiss T."/>
            <person name="Luchinat C."/>
            <person name="Quattrone A."/>
        </authorList>
    </citation>
    <scope>STRUCTURE BY NMR IN COMPLEX WITH CA(2+)</scope>
</reference>
<organism>
    <name type="scientific">Homo sapiens</name>
    <name type="common">Human</name>
    <dbReference type="NCBI Taxonomy" id="9606"/>
    <lineage>
        <taxon>Eukaryota</taxon>
        <taxon>Metazoa</taxon>
        <taxon>Chordata</taxon>
        <taxon>Craniata</taxon>
        <taxon>Vertebrata</taxon>
        <taxon>Euteleostomi</taxon>
        <taxon>Mammalia</taxon>
        <taxon>Eutheria</taxon>
        <taxon>Euarchontoglires</taxon>
        <taxon>Primates</taxon>
        <taxon>Haplorrhini</taxon>
        <taxon>Catarrhini</taxon>
        <taxon>Hominidae</taxon>
        <taxon>Homo</taxon>
    </lineage>
</organism>
<protein>
    <recommendedName>
        <fullName>Oncomodulin-1</fullName>
        <shortName>OM</shortName>
    </recommendedName>
    <alternativeName>
        <fullName>Parvalbumin beta</fullName>
    </alternativeName>
</protein>
<name>ONCO_HUMAN</name>
<comment type="function">
    <text>Has some calmodulin-like activity with respect to enzyme activation and growth regulation. Binds two calcium ions.</text>
</comment>
<comment type="interaction">
    <interactant intactId="EBI-11955379">
        <id>P0CE72</id>
    </interactant>
    <interactant intactId="EBI-1050662">
        <id>P12532</id>
        <label>CKMT1B</label>
    </interactant>
    <organismsDiffer>false</organismsDiffer>
    <experiments>6</experiments>
</comment>
<comment type="interaction">
    <interactant intactId="EBI-11955379">
        <id>P0CE72</id>
    </interactant>
    <interactant intactId="EBI-727004">
        <id>O00560</id>
        <label>SDCBP</label>
    </interactant>
    <organismsDiffer>false</organismsDiffer>
    <experiments>3</experiments>
</comment>
<comment type="similarity">
    <text evidence="4">Belongs to the parvalbumin family.</text>
</comment>